<comment type="function">
    <text evidence="5">May act as a carrier protein for the ROS scavenging lipoyl moiety and/or as a substrate for oxidoreductases such as SAV0322 and SAV0323.</text>
</comment>
<comment type="subunit">
    <text evidence="1 5">Lipoylated GcvH-L directly interacts with SAV0325, which reverses the SirTM-mediated mono-ADP-ribosylation of GcvH-L, and with the oxidoreductase SAV0322.</text>
</comment>
<comment type="PTM">
    <text evidence="3">Is lipoylated on K-56 by LplA2 (SAV0327) and then mono-ADP-ribosylated, probably on D-27, by SirTM (SAV0326). The mono-ADP-ribosylation state of GcvH-L might regulate the availability of the lipoyl moiety for redox reactions; ADP-ribosylation would inhibit the interaction of the oxidoreductase with GcvH-L when it is not required, thus ADP-ribosylation of GcvH-L might be acting to keep the response 'off' under non-stress conditions.</text>
</comment>
<evidence type="ECO:0000250" key="1">
    <source>
        <dbReference type="UniProtKB" id="P0DN69"/>
    </source>
</evidence>
<evidence type="ECO:0000255" key="2">
    <source>
        <dbReference type="PROSITE-ProRule" id="PRU01066"/>
    </source>
</evidence>
<evidence type="ECO:0000269" key="3">
    <source>
    </source>
</evidence>
<evidence type="ECO:0000303" key="4">
    <source>
    </source>
</evidence>
<evidence type="ECO:0000305" key="5">
    <source>
    </source>
</evidence>
<evidence type="ECO:0000312" key="6">
    <source>
        <dbReference type="EMBL" id="BAB56486.1"/>
    </source>
</evidence>
<feature type="chain" id="PRO_0000435342" description="Glycine cleavage system H-like protein">
    <location>
        <begin position="1"/>
        <end position="110"/>
    </location>
</feature>
<feature type="domain" description="Lipoyl-binding" evidence="2">
    <location>
        <begin position="10"/>
        <end position="97"/>
    </location>
</feature>
<feature type="modified residue" description="ADP-ribosyl aspartic acid" evidence="1">
    <location>
        <position position="27"/>
    </location>
</feature>
<feature type="modified residue" description="N6-lipoyllysine" evidence="3">
    <location>
        <position position="56"/>
    </location>
</feature>
<feature type="mutagenesis site" description="Decrease in lipoylation." evidence="3">
    <original>E</original>
    <variation>Q</variation>
    <location>
        <position position="53"/>
    </location>
</feature>
<feature type="mutagenesis site" description="Loss of lipoylation." evidence="3">
    <original>K</original>
    <variation>R</variation>
    <location>
        <position position="56"/>
    </location>
</feature>
<gene>
    <name evidence="6" type="ordered locus">SAV0324</name>
</gene>
<proteinExistence type="evidence at protein level"/>
<accession>A0A0H3JT43</accession>
<sequence length="110" mass="12422">MKKLANYLWVEKVGDLYVFSMTPELQDDIGTVGYVEFVSPDEVKVDDEIVSIEASKTVIDVQTPLSGTIIERNTKAEEEPTILNSEKPEENWLFKLDDVDKEAFLALPEA</sequence>
<protein>
    <recommendedName>
        <fullName evidence="4">Glycine cleavage system H-like protein</fullName>
        <shortName evidence="4">GcvH-L</shortName>
    </recommendedName>
</protein>
<organism>
    <name type="scientific">Staphylococcus aureus (strain Mu50 / ATCC 700699)</name>
    <dbReference type="NCBI Taxonomy" id="158878"/>
    <lineage>
        <taxon>Bacteria</taxon>
        <taxon>Bacillati</taxon>
        <taxon>Bacillota</taxon>
        <taxon>Bacilli</taxon>
        <taxon>Bacillales</taxon>
        <taxon>Staphylococcaceae</taxon>
        <taxon>Staphylococcus</taxon>
    </lineage>
</organism>
<name>GCVHL_STAAM</name>
<keyword id="KW-0013">ADP-ribosylation</keyword>
<keyword id="KW-0450">Lipoyl</keyword>
<reference key="1">
    <citation type="journal article" date="2001" name="Lancet">
        <title>Whole genome sequencing of meticillin-resistant Staphylococcus aureus.</title>
        <authorList>
            <person name="Kuroda M."/>
            <person name="Ohta T."/>
            <person name="Uchiyama I."/>
            <person name="Baba T."/>
            <person name="Yuzawa H."/>
            <person name="Kobayashi I."/>
            <person name="Cui L."/>
            <person name="Oguchi A."/>
            <person name="Aoki K."/>
            <person name="Nagai Y."/>
            <person name="Lian J.-Q."/>
            <person name="Ito T."/>
            <person name="Kanamori M."/>
            <person name="Matsumaru H."/>
            <person name="Maruyama A."/>
            <person name="Murakami H."/>
            <person name="Hosoyama A."/>
            <person name="Mizutani-Ui Y."/>
            <person name="Takahashi N.K."/>
            <person name="Sawano T."/>
            <person name="Inoue R."/>
            <person name="Kaito C."/>
            <person name="Sekimizu K."/>
            <person name="Hirakawa H."/>
            <person name="Kuhara S."/>
            <person name="Goto S."/>
            <person name="Yabuzaki J."/>
            <person name="Kanehisa M."/>
            <person name="Yamashita A."/>
            <person name="Oshima K."/>
            <person name="Furuya K."/>
            <person name="Yoshino C."/>
            <person name="Shiba T."/>
            <person name="Hattori M."/>
            <person name="Ogasawara N."/>
            <person name="Hayashi H."/>
            <person name="Hiramatsu K."/>
        </authorList>
    </citation>
    <scope>NUCLEOTIDE SEQUENCE [LARGE SCALE GENOMIC DNA]</scope>
    <source>
        <strain>Mu50 / ATCC 700699</strain>
    </source>
</reference>
<reference key="2">
    <citation type="journal article" date="2015" name="Mol. Cell">
        <title>Identification of a class of protein ADP-ribosylating sirtuins in microbial pathogens.</title>
        <authorList>
            <person name="Rack J.G."/>
            <person name="Morra R."/>
            <person name="Barkauskaite E."/>
            <person name="Kraehenbuehl R."/>
            <person name="Ariza A."/>
            <person name="Qu Y."/>
            <person name="Ortmayer M."/>
            <person name="Leidecker O."/>
            <person name="Cameron D.R."/>
            <person name="Matic I."/>
            <person name="Peleg A.Y."/>
            <person name="Leys D."/>
            <person name="Traven A."/>
            <person name="Ahel I."/>
        </authorList>
    </citation>
    <scope>LIPOYLATION AT LYS-56</scope>
    <scope>ADP-RIBOSYLATION</scope>
    <scope>MUTAGENESIS OF GLU-53 AND LYS-56</scope>
    <scope>FUNCTION</scope>
    <source>
        <strain>Mu50 / ATCC 700699</strain>
    </source>
</reference>
<dbReference type="EMBL" id="BA000017">
    <property type="protein sequence ID" value="BAB56486.1"/>
    <property type="molecule type" value="Genomic_DNA"/>
</dbReference>
<dbReference type="RefSeq" id="WP_000731878.1">
    <property type="nucleotide sequence ID" value="NC_002758.2"/>
</dbReference>
<dbReference type="SMR" id="A0A0H3JT43"/>
<dbReference type="KEGG" id="sav:SAV0324"/>
<dbReference type="HOGENOM" id="CLU_097408_3_0_9"/>
<dbReference type="PhylomeDB" id="A0A0H3JT43"/>
<dbReference type="Proteomes" id="UP000002481">
    <property type="component" value="Chromosome"/>
</dbReference>
<dbReference type="GO" id="GO:0005829">
    <property type="term" value="C:cytosol"/>
    <property type="evidence" value="ECO:0007669"/>
    <property type="project" value="TreeGrafter"/>
</dbReference>
<dbReference type="GO" id="GO:0005960">
    <property type="term" value="C:glycine cleavage complex"/>
    <property type="evidence" value="ECO:0007669"/>
    <property type="project" value="InterPro"/>
</dbReference>
<dbReference type="GO" id="GO:0019464">
    <property type="term" value="P:glycine decarboxylation via glycine cleavage system"/>
    <property type="evidence" value="ECO:0007669"/>
    <property type="project" value="InterPro"/>
</dbReference>
<dbReference type="CDD" id="cd06848">
    <property type="entry name" value="GCS_H"/>
    <property type="match status" value="1"/>
</dbReference>
<dbReference type="Gene3D" id="2.40.50.100">
    <property type="match status" value="1"/>
</dbReference>
<dbReference type="InterPro" id="IPR000089">
    <property type="entry name" value="Biotin_lipoyl"/>
</dbReference>
<dbReference type="InterPro" id="IPR002930">
    <property type="entry name" value="GCV_H"/>
</dbReference>
<dbReference type="InterPro" id="IPR033753">
    <property type="entry name" value="GCV_H/Fam206"/>
</dbReference>
<dbReference type="InterPro" id="IPR011053">
    <property type="entry name" value="Single_hybrid_motif"/>
</dbReference>
<dbReference type="PANTHER" id="PTHR11715">
    <property type="entry name" value="GLYCINE CLEAVAGE SYSTEM H PROTEIN"/>
    <property type="match status" value="1"/>
</dbReference>
<dbReference type="PANTHER" id="PTHR11715:SF3">
    <property type="entry name" value="GLYCINE CLEAVAGE SYSTEM H PROTEIN-RELATED"/>
    <property type="match status" value="1"/>
</dbReference>
<dbReference type="Pfam" id="PF01597">
    <property type="entry name" value="GCV_H"/>
    <property type="match status" value="1"/>
</dbReference>
<dbReference type="SUPFAM" id="SSF51230">
    <property type="entry name" value="Single hybrid motif"/>
    <property type="match status" value="1"/>
</dbReference>
<dbReference type="PROSITE" id="PS50968">
    <property type="entry name" value="BIOTINYL_LIPOYL"/>
    <property type="match status" value="1"/>
</dbReference>